<gene>
    <name evidence="1" type="primary">secB</name>
    <name type="ordered locus">RPD_0422</name>
</gene>
<accession>Q13E29</accession>
<feature type="chain" id="PRO_1000062507" description="Protein-export protein SecB">
    <location>
        <begin position="1"/>
        <end position="158"/>
    </location>
</feature>
<keyword id="KW-0143">Chaperone</keyword>
<keyword id="KW-0963">Cytoplasm</keyword>
<keyword id="KW-0653">Protein transport</keyword>
<keyword id="KW-0811">Translocation</keyword>
<keyword id="KW-0813">Transport</keyword>
<dbReference type="EMBL" id="CP000283">
    <property type="protein sequence ID" value="ABE37660.1"/>
    <property type="molecule type" value="Genomic_DNA"/>
</dbReference>
<dbReference type="SMR" id="Q13E29"/>
<dbReference type="STRING" id="316057.RPD_0422"/>
<dbReference type="KEGG" id="rpd:RPD_0422"/>
<dbReference type="eggNOG" id="COG1952">
    <property type="taxonomic scope" value="Bacteria"/>
</dbReference>
<dbReference type="HOGENOM" id="CLU_111574_0_0_5"/>
<dbReference type="BioCyc" id="RPAL316057:RPD_RS02170-MONOMER"/>
<dbReference type="Proteomes" id="UP000001818">
    <property type="component" value="Chromosome"/>
</dbReference>
<dbReference type="GO" id="GO:0005737">
    <property type="term" value="C:cytoplasm"/>
    <property type="evidence" value="ECO:0007669"/>
    <property type="project" value="UniProtKB-SubCell"/>
</dbReference>
<dbReference type="GO" id="GO:0051082">
    <property type="term" value="F:unfolded protein binding"/>
    <property type="evidence" value="ECO:0007669"/>
    <property type="project" value="InterPro"/>
</dbReference>
<dbReference type="GO" id="GO:0006457">
    <property type="term" value="P:protein folding"/>
    <property type="evidence" value="ECO:0007669"/>
    <property type="project" value="UniProtKB-UniRule"/>
</dbReference>
<dbReference type="GO" id="GO:0051262">
    <property type="term" value="P:protein tetramerization"/>
    <property type="evidence" value="ECO:0007669"/>
    <property type="project" value="InterPro"/>
</dbReference>
<dbReference type="GO" id="GO:0015031">
    <property type="term" value="P:protein transport"/>
    <property type="evidence" value="ECO:0007669"/>
    <property type="project" value="UniProtKB-UniRule"/>
</dbReference>
<dbReference type="Gene3D" id="3.10.420.10">
    <property type="entry name" value="SecB-like"/>
    <property type="match status" value="1"/>
</dbReference>
<dbReference type="HAMAP" id="MF_00821">
    <property type="entry name" value="SecB"/>
    <property type="match status" value="1"/>
</dbReference>
<dbReference type="InterPro" id="IPR003708">
    <property type="entry name" value="SecB"/>
</dbReference>
<dbReference type="InterPro" id="IPR035958">
    <property type="entry name" value="SecB-like_sf"/>
</dbReference>
<dbReference type="NCBIfam" id="NF004392">
    <property type="entry name" value="PRK05751.1-3"/>
    <property type="match status" value="1"/>
</dbReference>
<dbReference type="NCBIfam" id="TIGR00809">
    <property type="entry name" value="secB"/>
    <property type="match status" value="1"/>
</dbReference>
<dbReference type="PANTHER" id="PTHR36918">
    <property type="match status" value="1"/>
</dbReference>
<dbReference type="PANTHER" id="PTHR36918:SF1">
    <property type="entry name" value="PROTEIN-EXPORT PROTEIN SECB"/>
    <property type="match status" value="1"/>
</dbReference>
<dbReference type="Pfam" id="PF02556">
    <property type="entry name" value="SecB"/>
    <property type="match status" value="1"/>
</dbReference>
<dbReference type="PRINTS" id="PR01594">
    <property type="entry name" value="SECBCHAPRONE"/>
</dbReference>
<dbReference type="SUPFAM" id="SSF54611">
    <property type="entry name" value="SecB-like"/>
    <property type="match status" value="1"/>
</dbReference>
<organism>
    <name type="scientific">Rhodopseudomonas palustris (strain BisB5)</name>
    <dbReference type="NCBI Taxonomy" id="316057"/>
    <lineage>
        <taxon>Bacteria</taxon>
        <taxon>Pseudomonadati</taxon>
        <taxon>Pseudomonadota</taxon>
        <taxon>Alphaproteobacteria</taxon>
        <taxon>Hyphomicrobiales</taxon>
        <taxon>Nitrobacteraceae</taxon>
        <taxon>Rhodopseudomonas</taxon>
    </lineage>
</organism>
<comment type="function">
    <text evidence="1">One of the proteins required for the normal export of preproteins out of the cell cytoplasm. It is a molecular chaperone that binds to a subset of precursor proteins, maintaining them in a translocation-competent state. It also specifically binds to its receptor SecA.</text>
</comment>
<comment type="subunit">
    <text evidence="1">Homotetramer, a dimer of dimers. One homotetramer interacts with 1 SecA dimer.</text>
</comment>
<comment type="subcellular location">
    <subcellularLocation>
        <location evidence="1">Cytoplasm</location>
    </subcellularLocation>
</comment>
<comment type="similarity">
    <text evidence="1">Belongs to the SecB family.</text>
</comment>
<name>SECB_RHOPS</name>
<proteinExistence type="inferred from homology"/>
<protein>
    <recommendedName>
        <fullName evidence="1">Protein-export protein SecB</fullName>
    </recommendedName>
</protein>
<evidence type="ECO:0000255" key="1">
    <source>
        <dbReference type="HAMAP-Rule" id="MF_00821"/>
    </source>
</evidence>
<sequence>MTNGNGAPPEAVAAPQLNVLAQYTKDLSFENPNAPASLAQQQQQPAINIQINVGANNLAENEYEVTLSVEGKAESGSTVLFSFELAYAGVFRIVNVPQENLHPLIMIECPRLLFPFAREIIASAVRDGGFPPLMLDPVDFVGLYRQNMERQAQQGQPS</sequence>
<reference key="1">
    <citation type="submission" date="2006-03" db="EMBL/GenBank/DDBJ databases">
        <title>Complete sequence of Rhodopseudomonas palustris BisB5.</title>
        <authorList>
            <consortium name="US DOE Joint Genome Institute"/>
            <person name="Copeland A."/>
            <person name="Lucas S."/>
            <person name="Lapidus A."/>
            <person name="Barry K."/>
            <person name="Detter J.C."/>
            <person name="Glavina del Rio T."/>
            <person name="Hammon N."/>
            <person name="Israni S."/>
            <person name="Dalin E."/>
            <person name="Tice H."/>
            <person name="Pitluck S."/>
            <person name="Chain P."/>
            <person name="Malfatti S."/>
            <person name="Shin M."/>
            <person name="Vergez L."/>
            <person name="Schmutz J."/>
            <person name="Larimer F."/>
            <person name="Land M."/>
            <person name="Hauser L."/>
            <person name="Pelletier D.A."/>
            <person name="Kyrpides N."/>
            <person name="Lykidis A."/>
            <person name="Oda Y."/>
            <person name="Harwood C.S."/>
            <person name="Richardson P."/>
        </authorList>
    </citation>
    <scope>NUCLEOTIDE SEQUENCE [LARGE SCALE GENOMIC DNA]</scope>
    <source>
        <strain>BisB5</strain>
    </source>
</reference>